<accession>Q9YCI2</accession>
<sequence>MPILPSPNPPVEPYKIRMVEPIRLLPREERLRRLREAGWNVFRLRSIDIFIDLLTDSGTGSMSIYQWAALMTGDEAYAGARSWFRFRDAVRDVLGLDLVLPVHQGRAAERILYGELLRRRNARIVPANTHFDTGRAVILNQGGVPLDLPSPQASRREAYPFKGDIDVARLERLLKERSRDVAFILLVITNNTAGGQPVSMDNVKTVRELADAYGLPLVMDICRFAENAYLVKERDPRYRGWSVRDIAREMISYGDHFVMSAKKDGLANIGGFIATRDPSLYEDLAARVVLEEGYVTYGGLAGRDLEAIAQGLREVVEEDYLRHRVEQVRYLGELLSSQGVPIVEPVGGHAVYVDVLEALPEMPRSHYPADALAAALYLESGVRAVGLGALAFAREENGEIVYPEFELLRLAVPRRTYTNSHMEYVAASLARLLREGRRKVKGLRVVKEPRIKGIRHFLAELEPIEPV</sequence>
<organism>
    <name type="scientific">Aeropyrum pernix (strain ATCC 700893 / DSM 11879 / JCM 9820 / NBRC 100138 / K1)</name>
    <dbReference type="NCBI Taxonomy" id="272557"/>
    <lineage>
        <taxon>Archaea</taxon>
        <taxon>Thermoproteota</taxon>
        <taxon>Thermoprotei</taxon>
        <taxon>Desulfurococcales</taxon>
        <taxon>Desulfurococcaceae</taxon>
        <taxon>Aeropyrum</taxon>
    </lineage>
</organism>
<dbReference type="EC" id="4.1.99.1"/>
<dbReference type="EMBL" id="BA000002">
    <property type="protein sequence ID" value="BAA80265.1"/>
    <property type="molecule type" value="Genomic_DNA"/>
</dbReference>
<dbReference type="PIR" id="C72601">
    <property type="entry name" value="C72601"/>
</dbReference>
<dbReference type="RefSeq" id="WP_010866270.1">
    <property type="nucleotide sequence ID" value="NC_000854.2"/>
</dbReference>
<dbReference type="SMR" id="Q9YCI2"/>
<dbReference type="STRING" id="272557.APE_1275"/>
<dbReference type="EnsemblBacteria" id="BAA80265">
    <property type="protein sequence ID" value="BAA80265"/>
    <property type="gene ID" value="APE_1275"/>
</dbReference>
<dbReference type="GeneID" id="1445909"/>
<dbReference type="KEGG" id="ape:APE_1275"/>
<dbReference type="PATRIC" id="fig|272557.25.peg.873"/>
<dbReference type="eggNOG" id="arCOG04196">
    <property type="taxonomic scope" value="Archaea"/>
</dbReference>
<dbReference type="UniPathway" id="UPA00332">
    <property type="reaction ID" value="UER00452"/>
</dbReference>
<dbReference type="Proteomes" id="UP000002518">
    <property type="component" value="Chromosome"/>
</dbReference>
<dbReference type="GO" id="GO:0009034">
    <property type="term" value="F:tryptophanase activity"/>
    <property type="evidence" value="ECO:0007669"/>
    <property type="project" value="UniProtKB-UniRule"/>
</dbReference>
<dbReference type="Gene3D" id="3.90.1150.10">
    <property type="entry name" value="Aspartate Aminotransferase, domain 1"/>
    <property type="match status" value="1"/>
</dbReference>
<dbReference type="Gene3D" id="3.40.640.10">
    <property type="entry name" value="Type I PLP-dependent aspartate aminotransferase-like (Major domain)"/>
    <property type="match status" value="1"/>
</dbReference>
<dbReference type="HAMAP" id="MF_00544">
    <property type="entry name" value="Tryptophanase"/>
    <property type="match status" value="1"/>
</dbReference>
<dbReference type="InterPro" id="IPR001597">
    <property type="entry name" value="ArAA_b-elim_lyase/Thr_aldolase"/>
</dbReference>
<dbReference type="InterPro" id="IPR011166">
    <property type="entry name" value="Beta-eliminating_lyase"/>
</dbReference>
<dbReference type="InterPro" id="IPR015424">
    <property type="entry name" value="PyrdxlP-dep_Trfase"/>
</dbReference>
<dbReference type="InterPro" id="IPR015421">
    <property type="entry name" value="PyrdxlP-dep_Trfase_major"/>
</dbReference>
<dbReference type="InterPro" id="IPR015422">
    <property type="entry name" value="PyrdxlP-dep_Trfase_small"/>
</dbReference>
<dbReference type="InterPro" id="IPR013440">
    <property type="entry name" value="TNase"/>
</dbReference>
<dbReference type="InterPro" id="IPR018176">
    <property type="entry name" value="Tryptophanase_CS"/>
</dbReference>
<dbReference type="NCBIfam" id="NF009709">
    <property type="entry name" value="PRK13238.1"/>
    <property type="match status" value="1"/>
</dbReference>
<dbReference type="PANTHER" id="PTHR32325">
    <property type="entry name" value="BETA-ELIMINATING LYASE-LIKE PROTEIN-RELATED"/>
    <property type="match status" value="1"/>
</dbReference>
<dbReference type="PANTHER" id="PTHR32325:SF4">
    <property type="entry name" value="TRYPTOPHANASE"/>
    <property type="match status" value="1"/>
</dbReference>
<dbReference type="Pfam" id="PF01212">
    <property type="entry name" value="Beta_elim_lyase"/>
    <property type="match status" value="1"/>
</dbReference>
<dbReference type="PIRSF" id="PIRSF001386">
    <property type="entry name" value="Trpase"/>
    <property type="match status" value="1"/>
</dbReference>
<dbReference type="SUPFAM" id="SSF53383">
    <property type="entry name" value="PLP-dependent transferases"/>
    <property type="match status" value="1"/>
</dbReference>
<dbReference type="PROSITE" id="PS00853">
    <property type="entry name" value="BETA_ELIM_LYASE"/>
    <property type="match status" value="1"/>
</dbReference>
<evidence type="ECO:0000250" key="1"/>
<evidence type="ECO:0000305" key="2"/>
<keyword id="KW-0456">Lyase</keyword>
<keyword id="KW-0663">Pyridoxal phosphate</keyword>
<keyword id="KW-1185">Reference proteome</keyword>
<keyword id="KW-0823">Tryptophan catabolism</keyword>
<reference key="1">
    <citation type="journal article" date="1999" name="DNA Res.">
        <title>Complete genome sequence of an aerobic hyper-thermophilic crenarchaeon, Aeropyrum pernix K1.</title>
        <authorList>
            <person name="Kawarabayasi Y."/>
            <person name="Hino Y."/>
            <person name="Horikawa H."/>
            <person name="Yamazaki S."/>
            <person name="Haikawa Y."/>
            <person name="Jin-no K."/>
            <person name="Takahashi M."/>
            <person name="Sekine M."/>
            <person name="Baba S."/>
            <person name="Ankai A."/>
            <person name="Kosugi H."/>
            <person name="Hosoyama A."/>
            <person name="Fukui S."/>
            <person name="Nagai Y."/>
            <person name="Nishijima K."/>
            <person name="Nakazawa H."/>
            <person name="Takamiya M."/>
            <person name="Masuda S."/>
            <person name="Funahashi T."/>
            <person name="Tanaka T."/>
            <person name="Kudoh Y."/>
            <person name="Yamazaki J."/>
            <person name="Kushida N."/>
            <person name="Oguchi A."/>
            <person name="Aoki K."/>
            <person name="Kubota K."/>
            <person name="Nakamura Y."/>
            <person name="Nomura N."/>
            <person name="Sako Y."/>
            <person name="Kikuchi H."/>
        </authorList>
    </citation>
    <scope>NUCLEOTIDE SEQUENCE [LARGE SCALE GENOMIC DNA]</scope>
    <source>
        <strain>ATCC 700893 / DSM 11879 / JCM 9820 / NBRC 100138 / K1</strain>
    </source>
</reference>
<feature type="chain" id="PRO_0000195629" description="Probable tryptophanase">
    <location>
        <begin position="1"/>
        <end position="467"/>
    </location>
</feature>
<feature type="modified residue" description="N6-(pyridoxal phosphate)lysine" evidence="1">
    <location>
        <position position="263"/>
    </location>
</feature>
<gene>
    <name type="primary">tnaA</name>
    <name type="ordered locus">APE_1275</name>
</gene>
<name>TNAA_AERPE</name>
<comment type="catalytic activity">
    <reaction>
        <text>L-tryptophan + H2O = indole + pyruvate + NH4(+)</text>
        <dbReference type="Rhea" id="RHEA:19553"/>
        <dbReference type="ChEBI" id="CHEBI:15361"/>
        <dbReference type="ChEBI" id="CHEBI:15377"/>
        <dbReference type="ChEBI" id="CHEBI:16881"/>
        <dbReference type="ChEBI" id="CHEBI:28938"/>
        <dbReference type="ChEBI" id="CHEBI:57912"/>
        <dbReference type="EC" id="4.1.99.1"/>
    </reaction>
</comment>
<comment type="cofactor">
    <cofactor evidence="1">
        <name>pyridoxal 5'-phosphate</name>
        <dbReference type="ChEBI" id="CHEBI:597326"/>
    </cofactor>
</comment>
<comment type="pathway">
    <text>Amino-acid degradation; L-tryptophan degradation via pyruvate pathway; indole and pyruvate from L-tryptophan: step 1/1.</text>
</comment>
<comment type="similarity">
    <text evidence="2">Belongs to the beta-eliminating lyase family.</text>
</comment>
<protein>
    <recommendedName>
        <fullName>Probable tryptophanase</fullName>
        <ecNumber>4.1.99.1</ecNumber>
    </recommendedName>
    <alternativeName>
        <fullName>L-tryptophan indole-lyase</fullName>
        <shortName>TNase</shortName>
    </alternativeName>
</protein>
<proteinExistence type="inferred from homology"/>